<organism>
    <name type="scientific">Olivierus martensii</name>
    <name type="common">Manchurian scorpion</name>
    <name type="synonym">Mesobuthus martensii</name>
    <dbReference type="NCBI Taxonomy" id="34649"/>
    <lineage>
        <taxon>Eukaryota</taxon>
        <taxon>Metazoa</taxon>
        <taxon>Ecdysozoa</taxon>
        <taxon>Arthropoda</taxon>
        <taxon>Chelicerata</taxon>
        <taxon>Arachnida</taxon>
        <taxon>Scorpiones</taxon>
        <taxon>Buthida</taxon>
        <taxon>Buthoidea</taxon>
        <taxon>Buthidae</taxon>
        <taxon>Olivierus</taxon>
    </lineage>
</organism>
<accession>Q9UAD0</accession>
<comment type="function">
    <text evidence="3 4">Toxin with unknown function in healthy organisms. On glioma cells, inhibits chloride currents in a voltage-dependent manner (when tested on gliomas cells) (PubMed:17166663). Also interacts with MMP2 and significantly inhibits its catalytic activity (PubMed:21424168). May be internalized with chloride channels (probably ClC-3/CLCN3) and MMP2, thus inhibiting the chloride channels necessary for cell shrinkage and tumor propagation.</text>
</comment>
<comment type="subcellular location">
    <subcellularLocation>
        <location evidence="5">Secreted</location>
    </subcellularLocation>
</comment>
<comment type="tissue specificity">
    <text evidence="13">Expressed by the venom gland.</text>
</comment>
<comment type="domain">
    <text evidence="1">The presence of a 'disulfide through disulfide knot' structurally defines this protein as a knottin.</text>
</comment>
<comment type="mass spectrometry">
    <text>Monoisotopic mass.</text>
</comment>
<comment type="pharmaceutical">
    <text>This protein could be exploited as a potential therapeutic for glioma diagnosis and therapy, since it significantly inhibits the proliferation and metastasis of glioma cells, and has selective affinity to glioma cells.</text>
</comment>
<comment type="miscellaneous">
    <text evidence="12">Negative results: does not inhibit potassium and sodium currents.</text>
</comment>
<comment type="similarity">
    <text evidence="2">Belongs to the short scorpion toxin superfamily. Chloride channel inhibitor family.</text>
</comment>
<evidence type="ECO:0000250" key="1">
    <source>
        <dbReference type="UniProtKB" id="P15222"/>
    </source>
</evidence>
<evidence type="ECO:0000255" key="2">
    <source>
        <dbReference type="PROSITE-ProRule" id="PRU00545"/>
    </source>
</evidence>
<evidence type="ECO:0000269" key="3">
    <source>
    </source>
</evidence>
<evidence type="ECO:0000269" key="4">
    <source>
    </source>
</evidence>
<evidence type="ECO:0000269" key="5">
    <source>
    </source>
</evidence>
<evidence type="ECO:0000303" key="6">
    <source>
    </source>
</evidence>
<evidence type="ECO:0000303" key="7">
    <source>
    </source>
</evidence>
<evidence type="ECO:0000303" key="8">
    <source>
    </source>
</evidence>
<evidence type="ECO:0000303" key="9">
    <source>
    </source>
</evidence>
<evidence type="ECO:0000303" key="10">
    <source>
    </source>
</evidence>
<evidence type="ECO:0000303" key="11">
    <source>
    </source>
</evidence>
<evidence type="ECO:0000305" key="12">
    <source>
    </source>
</evidence>
<evidence type="ECO:0000305" key="13">
    <source>
    </source>
</evidence>
<evidence type="ECO:0000312" key="14">
    <source>
        <dbReference type="EMBL" id="AAD47373.1"/>
    </source>
</evidence>
<evidence type="ECO:0000312" key="15">
    <source>
        <dbReference type="EMBL" id="AAG01185.1"/>
    </source>
</evidence>
<evidence type="ECO:0000312" key="16">
    <source>
        <dbReference type="EMBL" id="AAK61823.1"/>
    </source>
</evidence>
<evidence type="ECO:0000312" key="17">
    <source>
        <dbReference type="EMBL" id="AAN32699.1"/>
    </source>
</evidence>
<reference evidence="15" key="1">
    <citation type="journal article" date="2000" name="Toxicon">
        <title>Cloning and characterization of a cDNA sequence encoding the precursor of a chlorotoxin-like peptide from the Chinese scorpion Buthus martensii Karsch.</title>
        <authorList>
            <person name="Zeng X.-C."/>
            <person name="Li W.-X."/>
            <person name="Zhu S.-Y."/>
            <person name="Peng F."/>
            <person name="Zhu Z.-H."/>
            <person name="Wu K.-L."/>
            <person name="Yiang F.-H."/>
        </authorList>
    </citation>
    <scope>NUCLEOTIDE SEQUENCE [MRNA]</scope>
    <source>
        <tissue>Venom gland</tissue>
    </source>
</reference>
<reference evidence="14" key="2">
    <citation type="journal article" date="2000" name="Toxicon">
        <title>The gene cloning and sequencing of Bm-12, a chlorotoxin-like peptide from the scorpion Buthus martensi Karsch.</title>
        <authorList>
            <person name="Wu J.J."/>
            <person name="Dai L."/>
            <person name="Lan Z.D."/>
            <person name="Chi C.W."/>
        </authorList>
    </citation>
    <scope>NUCLEOTIDE SEQUENCE [GENOMIC DNA]</scope>
    <source>
        <strain>Henan</strain>
    </source>
</reference>
<reference evidence="16 17" key="3">
    <citation type="submission" date="1999-06" db="EMBL/GenBank/DDBJ databases">
        <title>cDNA encoding a putative insect toxin from BmK.</title>
        <authorList>
            <person name="Zhu S.-Y."/>
            <person name="Li W.-X."/>
        </authorList>
    </citation>
    <scope>NUCLEOTIDE SEQUENCE [GENOMIC DNA / MRNA]</scope>
    <source>
        <tissue>Venom gland</tissue>
    </source>
</reference>
<reference key="4">
    <citation type="journal article" date="2013" name="Nat. Commun.">
        <title>The genome of Mesobuthus martensii reveals a unique adaptation model of arthropods.</title>
        <authorList>
            <person name="Cao Z."/>
            <person name="Yu Y."/>
            <person name="Wu Y."/>
            <person name="Hao P."/>
            <person name="Di Z."/>
            <person name="He Y."/>
            <person name="Chen Z."/>
            <person name="Yang W."/>
            <person name="Shen Z."/>
            <person name="He X."/>
            <person name="Sheng J."/>
            <person name="Xu X."/>
            <person name="Pan B."/>
            <person name="Feng J."/>
            <person name="Yang X."/>
            <person name="Hong W."/>
            <person name="Zhao W."/>
            <person name="Li Z."/>
            <person name="Huang K."/>
            <person name="Li T."/>
            <person name="Kong Y."/>
            <person name="Liu H."/>
            <person name="Jiang D."/>
            <person name="Zhang B."/>
            <person name="Hu J."/>
            <person name="Hu Y."/>
            <person name="Wang B."/>
            <person name="Dai J."/>
            <person name="Yuan B."/>
            <person name="Feng Y."/>
            <person name="Huang W."/>
            <person name="Xing X."/>
            <person name="Zhao G."/>
            <person name="Li X."/>
            <person name="Li Y."/>
            <person name="Li W."/>
        </authorList>
    </citation>
    <scope>NUCLEOTIDE SEQUENCE [LARGE SCALE GENOMIC DNA]</scope>
    <source>
        <tissue>Muscle</tissue>
    </source>
</reference>
<reference key="5">
    <citation type="journal article" date="2012" name="Proteomics">
        <title>Short-chain peptides identification of scorpion Buthus martensi Karsch venom by employing high orthogonal 2D-HPLC system and tandem mass spectrometry.</title>
        <authorList>
            <person name="Xu J."/>
            <person name="Zhang X."/>
            <person name="Guo Z."/>
            <person name="Yan J."/>
            <person name="Yu L."/>
            <person name="Li X."/>
            <person name="Xue X."/>
            <person name="Liang X."/>
        </authorList>
    </citation>
    <scope>PROTEIN SEQUENCE OF 25-37</scope>
    <scope>SUBCELLULAR LOCATION</scope>
    <scope>MASS SPECTROMETRY</scope>
    <source>
        <tissue>Venom</tissue>
    </source>
</reference>
<reference key="6">
    <citation type="journal article" date="2007" name="Neurosci. Lett.">
        <title>Therapeutic potential of chlorotoxin-like neurotoxin from the Chinese scorpion for human gliomas.</title>
        <authorList>
            <person name="Fu Y.J."/>
            <person name="Yin L.T."/>
            <person name="Liang A.H."/>
            <person name="Zhang C.F."/>
            <person name="Wang W."/>
            <person name="Chai B.F."/>
            <person name="Yang J.Y."/>
            <person name="Fan X.J."/>
        </authorList>
    </citation>
    <scope>FUNCTION</scope>
    <scope>PHARMACEUTICAL</scope>
</reference>
<reference key="7">
    <citation type="journal article" date="2010" name="Cancer Lett.">
        <title>BmKCT toxin inhibits glioma proliferation and tumor metastasis.</title>
        <authorList>
            <person name="Fan S."/>
            <person name="Sun Z."/>
            <person name="Jiang D."/>
            <person name="Dai C."/>
            <person name="Ma Y."/>
            <person name="Zhao Z."/>
            <person name="Liu H."/>
            <person name="Wu Y."/>
            <person name="Cao Z."/>
            <person name="Li W."/>
        </authorList>
    </citation>
    <scope>PHARMACEUTICAL</scope>
</reference>
<reference key="8">
    <citation type="journal article" date="2011" name="Biotechnol. Lett.">
        <title>A model of BmK CT in inhibiting glioma cell migration via matrix metalloproteinase-2 from experimental and molecular dynamics simulation study.</title>
        <authorList>
            <person name="Fu Y.J."/>
            <person name="An N."/>
            <person name="Chan K.G."/>
            <person name="Wu Y.B."/>
            <person name="Zheng S.H."/>
            <person name="Liang A.H."/>
        </authorList>
    </citation>
    <scope>FUNCTION</scope>
    <scope>MUTAGENESIS OF 37-ARG-LYS-38; ARG-40; LYS-48 AND ARG-58</scope>
    <scope>SITES ARG-37; LYS-38 AND ARG-40</scope>
</reference>
<feature type="signal peptide" evidence="5">
    <location>
        <begin position="1"/>
        <end position="24"/>
    </location>
</feature>
<feature type="chain" id="PRO_0000035315" description="Chlorotoxin-like BmK CT" evidence="13">
    <location>
        <begin position="25"/>
        <end position="59"/>
    </location>
</feature>
<feature type="site" description="Important for the binding to the catalytic site of MMP2">
    <location>
        <position position="37"/>
    </location>
</feature>
<feature type="site" description="Important for the binding to the catalytic site of MMP2">
    <location>
        <position position="38"/>
    </location>
</feature>
<feature type="site" description="Important for the binding to the catalytic site of MMP2">
    <location>
        <position position="40"/>
    </location>
</feature>
<feature type="disulfide bond" evidence="1 2">
    <location>
        <begin position="25"/>
        <end position="42"/>
    </location>
</feature>
<feature type="disulfide bond" evidence="1 2">
    <location>
        <begin position="28"/>
        <end position="49"/>
    </location>
</feature>
<feature type="disulfide bond" evidence="1 2">
    <location>
        <begin position="39"/>
        <end position="54"/>
    </location>
</feature>
<feature type="disulfide bond" evidence="1 2">
    <location>
        <begin position="43"/>
        <end position="56"/>
    </location>
</feature>
<feature type="mutagenesis site" description="Important increase in inhibition rates of glioma cell migration. Important decrease of inhibition of the catalytic activity of MMP2." evidence="4">
    <original>RK</original>
    <variation>AA</variation>
    <location>
        <begin position="37"/>
        <end position="38"/>
    </location>
</feature>
<feature type="mutagenesis site" description="Important increase in inhibition rates of glioma cell migration. Important decrease of inhibition of the catalytic activity of MMP2." evidence="4">
    <original>R</original>
    <variation>A</variation>
    <location>
        <position position="40"/>
    </location>
</feature>
<feature type="mutagenesis site" description="No change in inhibition rates of glioma cell migration. Weak decrease of inhibition of the catalytic activity of MMP2." evidence="4">
    <original>K</original>
    <variation>A</variation>
    <location>
        <position position="48"/>
    </location>
</feature>
<feature type="mutagenesis site" description="No change in inhibition rates of glioma cell migration. Weak decrease of inhibition of the catalytic activity of MMP2." evidence="4">
    <original>R</original>
    <variation>A</variation>
    <location>
        <position position="58"/>
    </location>
</feature>
<keyword id="KW-1265">Chloride channel impairing toxin</keyword>
<keyword id="KW-0903">Direct protein sequencing</keyword>
<keyword id="KW-1015">Disulfide bond</keyword>
<keyword id="KW-0872">Ion channel impairing toxin</keyword>
<keyword id="KW-0960">Knottin</keyword>
<keyword id="KW-0481">Metalloenzyme inhibitor</keyword>
<keyword id="KW-0483">Metalloprotease inhibitor</keyword>
<keyword id="KW-0582">Pharmaceutical</keyword>
<keyword id="KW-0646">Protease inhibitor</keyword>
<keyword id="KW-0964">Secreted</keyword>
<keyword id="KW-0732">Signal</keyword>
<keyword id="KW-0800">Toxin</keyword>
<keyword id="KW-0870">Voltage-gated chloride channel impairing toxin</keyword>
<proteinExistence type="evidence at protein level"/>
<dbReference type="EMBL" id="AF135821">
    <property type="protein sequence ID" value="AAG01185.1"/>
    <property type="molecule type" value="mRNA"/>
</dbReference>
<dbReference type="EMBL" id="AF079059">
    <property type="protein sequence ID" value="AAD47373.1"/>
    <property type="molecule type" value="Genomic_DNA"/>
</dbReference>
<dbReference type="EMBL" id="AF159976">
    <property type="protein sequence ID" value="AAK61823.1"/>
    <property type="molecule type" value="mRNA"/>
</dbReference>
<dbReference type="EMBL" id="AF419252">
    <property type="protein sequence ID" value="AAN32699.1"/>
    <property type="molecule type" value="Genomic_DNA"/>
</dbReference>
<dbReference type="SMR" id="Q9UAD0"/>
<dbReference type="GO" id="GO:0005576">
    <property type="term" value="C:extracellular region"/>
    <property type="evidence" value="ECO:0007669"/>
    <property type="project" value="UniProtKB-SubCell"/>
</dbReference>
<dbReference type="GO" id="GO:0017081">
    <property type="term" value="F:chloride channel regulator activity"/>
    <property type="evidence" value="ECO:0007669"/>
    <property type="project" value="UniProtKB-KW"/>
</dbReference>
<dbReference type="GO" id="GO:0030414">
    <property type="term" value="F:peptidase inhibitor activity"/>
    <property type="evidence" value="ECO:0007669"/>
    <property type="project" value="UniProtKB-KW"/>
</dbReference>
<dbReference type="GO" id="GO:0090729">
    <property type="term" value="F:toxin activity"/>
    <property type="evidence" value="ECO:0007669"/>
    <property type="project" value="UniProtKB-KW"/>
</dbReference>
<dbReference type="InterPro" id="IPR036574">
    <property type="entry name" value="Scorpion_toxin-like_sf"/>
</dbReference>
<dbReference type="InterPro" id="IPR007958">
    <property type="entry name" value="Scorpion_toxinS_Cl_inh"/>
</dbReference>
<dbReference type="Pfam" id="PF05294">
    <property type="entry name" value="Toxin_5"/>
    <property type="match status" value="1"/>
</dbReference>
<dbReference type="SUPFAM" id="SSF57095">
    <property type="entry name" value="Scorpion toxin-like"/>
    <property type="match status" value="1"/>
</dbReference>
<dbReference type="PROSITE" id="PS51200">
    <property type="entry name" value="SHORT_SCORPION_CHLORIDE"/>
    <property type="match status" value="1"/>
</dbReference>
<sequence>MKFLYGIVFIALFLTVMFATQTDGCGPCFTTDANMARKCRECCGGIGKCFGPQCLCNRI</sequence>
<name>CTXL_OLIMR</name>
<protein>
    <recommendedName>
        <fullName evidence="6 8 10">Chlorotoxin-like BmK CT</fullName>
        <shortName evidence="7 9">BmKCT</shortName>
    </recommendedName>
    <alternativeName>
        <fullName evidence="6">Bm-12</fullName>
    </alternativeName>
    <alternativeName>
        <fullName>BmKCL1</fullName>
    </alternativeName>
    <alternativeName>
        <fullName evidence="11">BmKClTx3</fullName>
    </alternativeName>
    <alternativeName>
        <fullName evidence="11">BmKClTx4</fullName>
    </alternativeName>
    <alternativeName>
        <fullName evidence="14">CT neurotoxin</fullName>
    </alternativeName>
    <alternativeName>
        <fullName evidence="15">Short-chain toxin KCT</fullName>
    </alternativeName>
    <alternativeName>
        <fullName evidence="16">TXCL1</fullName>
    </alternativeName>
</protein>